<geneLocation type="chloroplast"/>
<reference key="1">
    <citation type="journal article" date="2008" name="Theor. Appl. Genet.">
        <title>The complete nucleotide sequence of the cassava (Manihot esculenta) chloroplast genome and the evolution of atpF in Malpighiales: RNA editing and multiple losses of a group II intron.</title>
        <authorList>
            <person name="Daniell H."/>
            <person name="Wurdack K.J."/>
            <person name="Kanagaraj A."/>
            <person name="Lee S.-B."/>
            <person name="Saski C."/>
            <person name="Jansen R.K."/>
        </authorList>
    </citation>
    <scope>NUCLEOTIDE SEQUENCE [LARGE SCALE GENOMIC DNA]</scope>
    <source>
        <strain>cv. TME3</strain>
    </source>
</reference>
<feature type="chain" id="PRO_0000358004" description="NAD(P)H-quinone oxidoreductase subunit H, chloroplastic">
    <location>
        <begin position="1"/>
        <end position="393"/>
    </location>
</feature>
<protein>
    <recommendedName>
        <fullName evidence="1">NAD(P)H-quinone oxidoreductase subunit H, chloroplastic</fullName>
        <ecNumber evidence="1">7.1.1.-</ecNumber>
    </recommendedName>
    <alternativeName>
        <fullName>NAD(P)H dehydrogenase subunit H</fullName>
    </alternativeName>
    <alternativeName>
        <fullName evidence="1">NADH-plastoquinone oxidoreductase 49 kDa subunit</fullName>
    </alternativeName>
    <alternativeName>
        <fullName evidence="1">NADH-plastoquinone oxidoreductase subunit H</fullName>
    </alternativeName>
</protein>
<name>NDHH_MANES</name>
<keyword id="KW-0150">Chloroplast</keyword>
<keyword id="KW-0472">Membrane</keyword>
<keyword id="KW-0520">NAD</keyword>
<keyword id="KW-0521">NADP</keyword>
<keyword id="KW-0934">Plastid</keyword>
<keyword id="KW-0618">Plastoquinone</keyword>
<keyword id="KW-0874">Quinone</keyword>
<keyword id="KW-0793">Thylakoid</keyword>
<keyword id="KW-1278">Translocase</keyword>
<keyword id="KW-0813">Transport</keyword>
<gene>
    <name evidence="1" type="primary">ndhH</name>
</gene>
<proteinExistence type="inferred from homology"/>
<organism>
    <name type="scientific">Manihot esculenta</name>
    <name type="common">Cassava</name>
    <name type="synonym">Jatropha manihot</name>
    <dbReference type="NCBI Taxonomy" id="3983"/>
    <lineage>
        <taxon>Eukaryota</taxon>
        <taxon>Viridiplantae</taxon>
        <taxon>Streptophyta</taxon>
        <taxon>Embryophyta</taxon>
        <taxon>Tracheophyta</taxon>
        <taxon>Spermatophyta</taxon>
        <taxon>Magnoliopsida</taxon>
        <taxon>eudicotyledons</taxon>
        <taxon>Gunneridae</taxon>
        <taxon>Pentapetalae</taxon>
        <taxon>rosids</taxon>
        <taxon>fabids</taxon>
        <taxon>Malpighiales</taxon>
        <taxon>Euphorbiaceae</taxon>
        <taxon>Crotonoideae</taxon>
        <taxon>Manihoteae</taxon>
        <taxon>Manihot</taxon>
    </lineage>
</organism>
<accession>B1NWK5</accession>
<sequence length="393" mass="45492">MNVPATRKDLMIVNMGPHHPSMHGVLRLIVTLDGEDVIDCEPILGYLHRGMEKIAENRTIIQYLPYVTRWDYLATMFTEAITVNGPELLGNIQVPKRAGYIRVIMLELSRIASHLLWLGPFMADIGAQTPFFYIFRERELVYDLFEAATGMRMMHNFFRIGGVASDLPHGWIDKCLDFCDYFLTGVTEYQKLITRNPIFLERVEGVGIVGTEEAINWGLSGPMLRASGVQWDLRKVDHYECYDEFDWEIQWQKEGDSLARYLVRIGEMLESIKIIQQALEGIPGGPYENLETRRFDRERDSEWNDFEYRFISKKTSPTFELPKQELYVRVEAPKGELGIFLIGDQSGFPWRWKIRPPGFINLQILPELVKRMKLADIMTILGSIDIIMGEVDR</sequence>
<comment type="function">
    <text evidence="1">NDH shuttles electrons from NAD(P)H:plastoquinone, via FMN and iron-sulfur (Fe-S) centers, to quinones in the photosynthetic chain and possibly in a chloroplast respiratory chain. The immediate electron acceptor for the enzyme in this species is believed to be plastoquinone. Couples the redox reaction to proton translocation, and thus conserves the redox energy in a proton gradient.</text>
</comment>
<comment type="catalytic activity">
    <reaction evidence="1">
        <text>a plastoquinone + NADH + (n+1) H(+)(in) = a plastoquinol + NAD(+) + n H(+)(out)</text>
        <dbReference type="Rhea" id="RHEA:42608"/>
        <dbReference type="Rhea" id="RHEA-COMP:9561"/>
        <dbReference type="Rhea" id="RHEA-COMP:9562"/>
        <dbReference type="ChEBI" id="CHEBI:15378"/>
        <dbReference type="ChEBI" id="CHEBI:17757"/>
        <dbReference type="ChEBI" id="CHEBI:57540"/>
        <dbReference type="ChEBI" id="CHEBI:57945"/>
        <dbReference type="ChEBI" id="CHEBI:62192"/>
    </reaction>
</comment>
<comment type="catalytic activity">
    <reaction evidence="1">
        <text>a plastoquinone + NADPH + (n+1) H(+)(in) = a plastoquinol + NADP(+) + n H(+)(out)</text>
        <dbReference type="Rhea" id="RHEA:42612"/>
        <dbReference type="Rhea" id="RHEA-COMP:9561"/>
        <dbReference type="Rhea" id="RHEA-COMP:9562"/>
        <dbReference type="ChEBI" id="CHEBI:15378"/>
        <dbReference type="ChEBI" id="CHEBI:17757"/>
        <dbReference type="ChEBI" id="CHEBI:57783"/>
        <dbReference type="ChEBI" id="CHEBI:58349"/>
        <dbReference type="ChEBI" id="CHEBI:62192"/>
    </reaction>
</comment>
<comment type="subunit">
    <text evidence="1">NDH is composed of at least 16 different subunits, 5 of which are encoded in the nucleus.</text>
</comment>
<comment type="subcellular location">
    <subcellularLocation>
        <location evidence="1">Plastid</location>
        <location evidence="1">Chloroplast thylakoid membrane</location>
        <topology evidence="1">Peripheral membrane protein</topology>
        <orientation evidence="1">Stromal side</orientation>
    </subcellularLocation>
</comment>
<comment type="similarity">
    <text evidence="1">Belongs to the complex I 49 kDa subunit family.</text>
</comment>
<dbReference type="EC" id="7.1.1.-" evidence="1"/>
<dbReference type="EMBL" id="EU117376">
    <property type="protein sequence ID" value="ABV66209.1"/>
    <property type="molecule type" value="Genomic_DNA"/>
</dbReference>
<dbReference type="RefSeq" id="YP_001718492.1">
    <property type="nucleotide sequence ID" value="NC_010433.1"/>
</dbReference>
<dbReference type="SMR" id="B1NWK5"/>
<dbReference type="GeneID" id="5999966"/>
<dbReference type="KEGG" id="mesc:5999966"/>
<dbReference type="OrthoDB" id="1845069at2759"/>
<dbReference type="GO" id="GO:0009535">
    <property type="term" value="C:chloroplast thylakoid membrane"/>
    <property type="evidence" value="ECO:0007669"/>
    <property type="project" value="UniProtKB-SubCell"/>
</dbReference>
<dbReference type="GO" id="GO:0051287">
    <property type="term" value="F:NAD binding"/>
    <property type="evidence" value="ECO:0007669"/>
    <property type="project" value="InterPro"/>
</dbReference>
<dbReference type="GO" id="GO:0016655">
    <property type="term" value="F:oxidoreductase activity, acting on NAD(P)H, quinone or similar compound as acceptor"/>
    <property type="evidence" value="ECO:0007669"/>
    <property type="project" value="UniProtKB-UniRule"/>
</dbReference>
<dbReference type="GO" id="GO:0048038">
    <property type="term" value="F:quinone binding"/>
    <property type="evidence" value="ECO:0007669"/>
    <property type="project" value="UniProtKB-KW"/>
</dbReference>
<dbReference type="GO" id="GO:0019684">
    <property type="term" value="P:photosynthesis, light reaction"/>
    <property type="evidence" value="ECO:0007669"/>
    <property type="project" value="UniProtKB-UniRule"/>
</dbReference>
<dbReference type="FunFam" id="1.10.645.10:FF:000003">
    <property type="entry name" value="NAD(P)H-quinone oxidoreductase subunit H, chloroplastic"/>
    <property type="match status" value="1"/>
</dbReference>
<dbReference type="Gene3D" id="1.10.645.10">
    <property type="entry name" value="Cytochrome-c3 Hydrogenase, chain B"/>
    <property type="match status" value="1"/>
</dbReference>
<dbReference type="HAMAP" id="MF_01358">
    <property type="entry name" value="NDH1_NuoD"/>
    <property type="match status" value="1"/>
</dbReference>
<dbReference type="InterPro" id="IPR001135">
    <property type="entry name" value="NADH_Q_OxRdtase_suD"/>
</dbReference>
<dbReference type="InterPro" id="IPR014029">
    <property type="entry name" value="NADH_UbQ_OxRdtase_49kDa_CS"/>
</dbReference>
<dbReference type="InterPro" id="IPR022885">
    <property type="entry name" value="NDH1_su_D/H"/>
</dbReference>
<dbReference type="InterPro" id="IPR029014">
    <property type="entry name" value="NiFe-Hase_large"/>
</dbReference>
<dbReference type="NCBIfam" id="NF004739">
    <property type="entry name" value="PRK06075.1"/>
    <property type="match status" value="1"/>
</dbReference>
<dbReference type="NCBIfam" id="NF005649">
    <property type="entry name" value="PRK07415.1"/>
    <property type="match status" value="1"/>
</dbReference>
<dbReference type="PANTHER" id="PTHR11993:SF10">
    <property type="entry name" value="NADH DEHYDROGENASE [UBIQUINONE] IRON-SULFUR PROTEIN 2, MITOCHONDRIAL"/>
    <property type="match status" value="1"/>
</dbReference>
<dbReference type="PANTHER" id="PTHR11993">
    <property type="entry name" value="NADH-UBIQUINONE OXIDOREDUCTASE 49 KDA SUBUNIT"/>
    <property type="match status" value="1"/>
</dbReference>
<dbReference type="Pfam" id="PF00346">
    <property type="entry name" value="Complex1_49kDa"/>
    <property type="match status" value="1"/>
</dbReference>
<dbReference type="SUPFAM" id="SSF56762">
    <property type="entry name" value="HydB/Nqo4-like"/>
    <property type="match status" value="1"/>
</dbReference>
<dbReference type="PROSITE" id="PS00535">
    <property type="entry name" value="COMPLEX1_49K"/>
    <property type="match status" value="1"/>
</dbReference>
<evidence type="ECO:0000255" key="1">
    <source>
        <dbReference type="HAMAP-Rule" id="MF_01358"/>
    </source>
</evidence>